<protein>
    <recommendedName>
        <fullName evidence="1">Glutamyl-Q tRNA(Asp) synthetase</fullName>
        <shortName evidence="1">Glu-Q-RSs</shortName>
        <ecNumber evidence="1">6.1.1.-</ecNumber>
    </recommendedName>
</protein>
<feature type="chain" id="PRO_0000208313" description="Glutamyl-Q tRNA(Asp) synthetase">
    <location>
        <begin position="1"/>
        <end position="347"/>
    </location>
</feature>
<feature type="short sequence motif" description="'HIGH' region">
    <location>
        <begin position="34"/>
        <end position="44"/>
    </location>
</feature>
<feature type="short sequence motif" description="'KMSKS' region">
    <location>
        <begin position="259"/>
        <end position="263"/>
    </location>
</feature>
<feature type="binding site" evidence="1">
    <location>
        <begin position="31"/>
        <end position="35"/>
    </location>
    <ligand>
        <name>L-glutamate</name>
        <dbReference type="ChEBI" id="CHEBI:29985"/>
    </ligand>
</feature>
<feature type="binding site" evidence="1">
    <location>
        <position position="67"/>
    </location>
    <ligand>
        <name>L-glutamate</name>
        <dbReference type="ChEBI" id="CHEBI:29985"/>
    </ligand>
</feature>
<feature type="binding site" evidence="1">
    <location>
        <position position="121"/>
    </location>
    <ligand>
        <name>Zn(2+)</name>
        <dbReference type="ChEBI" id="CHEBI:29105"/>
    </ligand>
</feature>
<feature type="binding site" evidence="1">
    <location>
        <position position="123"/>
    </location>
    <ligand>
        <name>Zn(2+)</name>
        <dbReference type="ChEBI" id="CHEBI:29105"/>
    </ligand>
</feature>
<feature type="binding site" evidence="1">
    <location>
        <position position="143"/>
    </location>
    <ligand>
        <name>Zn(2+)</name>
        <dbReference type="ChEBI" id="CHEBI:29105"/>
    </ligand>
</feature>
<feature type="binding site" evidence="1">
    <location>
        <position position="147"/>
    </location>
    <ligand>
        <name>Zn(2+)</name>
        <dbReference type="ChEBI" id="CHEBI:29105"/>
    </ligand>
</feature>
<feature type="binding site" evidence="1">
    <location>
        <position position="203"/>
    </location>
    <ligand>
        <name>L-glutamate</name>
        <dbReference type="ChEBI" id="CHEBI:29985"/>
    </ligand>
</feature>
<feature type="binding site" evidence="1">
    <location>
        <position position="221"/>
    </location>
    <ligand>
        <name>L-glutamate</name>
        <dbReference type="ChEBI" id="CHEBI:29985"/>
    </ligand>
</feature>
<feature type="binding site" evidence="1">
    <location>
        <position position="262"/>
    </location>
    <ligand>
        <name>ATP</name>
        <dbReference type="ChEBI" id="CHEBI:30616"/>
    </ligand>
</feature>
<name>GLUQ_CUTAK</name>
<sequence length="347" mass="37357">MPAASPQLLPTLPLVTDFATTHSGLRHAAGRFAPSPTSALHLGNLRTALAAWLLARSTGRRFVVRIEDLDRARVAAAGKIASTQLRDLESLGLDWDGPVVRQSERLDLYADAVAGLETYPCFCTRREIAAATTAPNEADWRPYPGTCRRLTVQQRHERLTTRAPATRLASQLNTFEATDLARGCARGRVDDLVLVRNDGTPAYNLAVVVDDGLQGVDQVVRARDLWSSAPRQAQLAELLGFIPPVYAHTGLVTGPGGVRLSKSAGAAGLSDLVDSGIDHRQVVAWLCRSLGLPEVADPHELVNNVALTPPTPVAGIHRLDPRPLGGAMGWWSDAVLDVAVLRETRRP</sequence>
<comment type="function">
    <text evidence="1">Catalyzes the tRNA-independent activation of glutamate in presence of ATP and the subsequent transfer of glutamate onto a tRNA(Asp). Glutamate is transferred on the 2-amino-5-(4,5-dihydroxy-2-cyclopenten-1-yl) moiety of the queuosine in the wobble position of the QUC anticodon.</text>
</comment>
<comment type="cofactor">
    <cofactor evidence="1">
        <name>Zn(2+)</name>
        <dbReference type="ChEBI" id="CHEBI:29105"/>
    </cofactor>
    <text evidence="1">Binds 1 zinc ion per subunit.</text>
</comment>
<comment type="similarity">
    <text evidence="1">Belongs to the class-I aminoacyl-tRNA synthetase family. GluQ subfamily.</text>
</comment>
<reference key="1">
    <citation type="journal article" date="2004" name="Science">
        <title>The complete genome sequence of Propionibacterium acnes, a commensal of human skin.</title>
        <authorList>
            <person name="Brueggemann H."/>
            <person name="Henne A."/>
            <person name="Hoster F."/>
            <person name="Liesegang H."/>
            <person name="Wiezer A."/>
            <person name="Strittmatter A."/>
            <person name="Hujer S."/>
            <person name="Duerre P."/>
            <person name="Gottschalk G."/>
        </authorList>
    </citation>
    <scope>NUCLEOTIDE SEQUENCE [LARGE SCALE GENOMIC DNA]</scope>
    <source>
        <strain>DSM 16379 / KPA171202</strain>
    </source>
</reference>
<accession>Q6A7Y1</accession>
<dbReference type="EC" id="6.1.1.-" evidence="1"/>
<dbReference type="EMBL" id="AE017283">
    <property type="protein sequence ID" value="AAT83134.1"/>
    <property type="molecule type" value="Genomic_DNA"/>
</dbReference>
<dbReference type="SMR" id="Q6A7Y1"/>
<dbReference type="EnsemblBacteria" id="AAT83134">
    <property type="protein sequence ID" value="AAT83134"/>
    <property type="gene ID" value="PPA1383"/>
</dbReference>
<dbReference type="KEGG" id="pac:PPA1383"/>
<dbReference type="PATRIC" id="fig|267747.3.peg.1428"/>
<dbReference type="eggNOG" id="COG0008">
    <property type="taxonomic scope" value="Bacteria"/>
</dbReference>
<dbReference type="HOGENOM" id="CLU_015768_0_0_11"/>
<dbReference type="Proteomes" id="UP000000603">
    <property type="component" value="Chromosome"/>
</dbReference>
<dbReference type="GO" id="GO:0005829">
    <property type="term" value="C:cytosol"/>
    <property type="evidence" value="ECO:0007669"/>
    <property type="project" value="TreeGrafter"/>
</dbReference>
<dbReference type="GO" id="GO:0005524">
    <property type="term" value="F:ATP binding"/>
    <property type="evidence" value="ECO:0007669"/>
    <property type="project" value="UniProtKB-KW"/>
</dbReference>
<dbReference type="GO" id="GO:0004818">
    <property type="term" value="F:glutamate-tRNA ligase activity"/>
    <property type="evidence" value="ECO:0007669"/>
    <property type="project" value="TreeGrafter"/>
</dbReference>
<dbReference type="GO" id="GO:0008270">
    <property type="term" value="F:zinc ion binding"/>
    <property type="evidence" value="ECO:0007669"/>
    <property type="project" value="UniProtKB-UniRule"/>
</dbReference>
<dbReference type="GO" id="GO:0006424">
    <property type="term" value="P:glutamyl-tRNA aminoacylation"/>
    <property type="evidence" value="ECO:0007669"/>
    <property type="project" value="InterPro"/>
</dbReference>
<dbReference type="GO" id="GO:0006400">
    <property type="term" value="P:tRNA modification"/>
    <property type="evidence" value="ECO:0007669"/>
    <property type="project" value="InterPro"/>
</dbReference>
<dbReference type="Gene3D" id="3.40.50.620">
    <property type="entry name" value="HUPs"/>
    <property type="match status" value="1"/>
</dbReference>
<dbReference type="HAMAP" id="MF_01428">
    <property type="entry name" value="Glu_Q_tRNA_synth"/>
    <property type="match status" value="1"/>
</dbReference>
<dbReference type="InterPro" id="IPR022380">
    <property type="entry name" value="Glu-Q_tRNA(Asp)_Synthase"/>
</dbReference>
<dbReference type="InterPro" id="IPR000924">
    <property type="entry name" value="Glu/Gln-tRNA-synth"/>
</dbReference>
<dbReference type="InterPro" id="IPR020058">
    <property type="entry name" value="Glu/Gln-tRNA-synth_Ib_cat-dom"/>
</dbReference>
<dbReference type="InterPro" id="IPR049940">
    <property type="entry name" value="GluQ/Sye"/>
</dbReference>
<dbReference type="InterPro" id="IPR014729">
    <property type="entry name" value="Rossmann-like_a/b/a_fold"/>
</dbReference>
<dbReference type="NCBIfam" id="NF004315">
    <property type="entry name" value="PRK05710.1-4"/>
    <property type="match status" value="1"/>
</dbReference>
<dbReference type="PANTHER" id="PTHR43311">
    <property type="entry name" value="GLUTAMATE--TRNA LIGASE"/>
    <property type="match status" value="1"/>
</dbReference>
<dbReference type="PANTHER" id="PTHR43311:SF1">
    <property type="entry name" value="GLUTAMYL-Q TRNA(ASP) SYNTHETASE"/>
    <property type="match status" value="1"/>
</dbReference>
<dbReference type="Pfam" id="PF00749">
    <property type="entry name" value="tRNA-synt_1c"/>
    <property type="match status" value="1"/>
</dbReference>
<dbReference type="PRINTS" id="PR00987">
    <property type="entry name" value="TRNASYNTHGLU"/>
</dbReference>
<dbReference type="SUPFAM" id="SSF52374">
    <property type="entry name" value="Nucleotidylyl transferase"/>
    <property type="match status" value="1"/>
</dbReference>
<gene>
    <name evidence="1" type="primary">gluQ</name>
    <name type="ordered locus">PPA1383</name>
</gene>
<proteinExistence type="inferred from homology"/>
<organism>
    <name type="scientific">Cutibacterium acnes (strain DSM 16379 / KPA171202)</name>
    <name type="common">Propionibacterium acnes</name>
    <dbReference type="NCBI Taxonomy" id="267747"/>
    <lineage>
        <taxon>Bacteria</taxon>
        <taxon>Bacillati</taxon>
        <taxon>Actinomycetota</taxon>
        <taxon>Actinomycetes</taxon>
        <taxon>Propionibacteriales</taxon>
        <taxon>Propionibacteriaceae</taxon>
        <taxon>Cutibacterium</taxon>
    </lineage>
</organism>
<keyword id="KW-0030">Aminoacyl-tRNA synthetase</keyword>
<keyword id="KW-0067">ATP-binding</keyword>
<keyword id="KW-0436">Ligase</keyword>
<keyword id="KW-0479">Metal-binding</keyword>
<keyword id="KW-0547">Nucleotide-binding</keyword>
<keyword id="KW-0862">Zinc</keyword>
<evidence type="ECO:0000255" key="1">
    <source>
        <dbReference type="HAMAP-Rule" id="MF_01428"/>
    </source>
</evidence>